<proteinExistence type="inferred from homology"/>
<dbReference type="EC" id="5.1.1.3" evidence="1"/>
<dbReference type="EMBL" id="AP006627">
    <property type="protein sequence ID" value="BAD65191.1"/>
    <property type="molecule type" value="Genomic_DNA"/>
</dbReference>
<dbReference type="RefSeq" id="WP_011247499.1">
    <property type="nucleotide sequence ID" value="NC_006582.1"/>
</dbReference>
<dbReference type="SMR" id="Q5WEL9"/>
<dbReference type="STRING" id="66692.ABC2656"/>
<dbReference type="KEGG" id="bcl:ABC2656"/>
<dbReference type="eggNOG" id="COG0796">
    <property type="taxonomic scope" value="Bacteria"/>
</dbReference>
<dbReference type="HOGENOM" id="CLU_052344_0_2_9"/>
<dbReference type="OrthoDB" id="9801055at2"/>
<dbReference type="UniPathway" id="UPA00219"/>
<dbReference type="Proteomes" id="UP000001168">
    <property type="component" value="Chromosome"/>
</dbReference>
<dbReference type="GO" id="GO:0008881">
    <property type="term" value="F:glutamate racemase activity"/>
    <property type="evidence" value="ECO:0007669"/>
    <property type="project" value="UniProtKB-UniRule"/>
</dbReference>
<dbReference type="GO" id="GO:0071555">
    <property type="term" value="P:cell wall organization"/>
    <property type="evidence" value="ECO:0007669"/>
    <property type="project" value="UniProtKB-KW"/>
</dbReference>
<dbReference type="GO" id="GO:0009252">
    <property type="term" value="P:peptidoglycan biosynthetic process"/>
    <property type="evidence" value="ECO:0007669"/>
    <property type="project" value="UniProtKB-UniRule"/>
</dbReference>
<dbReference type="GO" id="GO:0008360">
    <property type="term" value="P:regulation of cell shape"/>
    <property type="evidence" value="ECO:0007669"/>
    <property type="project" value="UniProtKB-KW"/>
</dbReference>
<dbReference type="FunFam" id="3.40.50.1860:FF:000002">
    <property type="entry name" value="Glutamate racemase"/>
    <property type="match status" value="1"/>
</dbReference>
<dbReference type="Gene3D" id="3.40.50.1860">
    <property type="match status" value="2"/>
</dbReference>
<dbReference type="HAMAP" id="MF_00258">
    <property type="entry name" value="Glu_racemase"/>
    <property type="match status" value="1"/>
</dbReference>
<dbReference type="InterPro" id="IPR015942">
    <property type="entry name" value="Asp/Glu/hydantoin_racemase"/>
</dbReference>
<dbReference type="InterPro" id="IPR001920">
    <property type="entry name" value="Asp/Glu_race"/>
</dbReference>
<dbReference type="InterPro" id="IPR018187">
    <property type="entry name" value="Asp/Glu_racemase_AS_1"/>
</dbReference>
<dbReference type="InterPro" id="IPR033134">
    <property type="entry name" value="Asp/Glu_racemase_AS_2"/>
</dbReference>
<dbReference type="InterPro" id="IPR004391">
    <property type="entry name" value="Glu_race"/>
</dbReference>
<dbReference type="NCBIfam" id="TIGR00067">
    <property type="entry name" value="glut_race"/>
    <property type="match status" value="1"/>
</dbReference>
<dbReference type="NCBIfam" id="NF002035">
    <property type="entry name" value="PRK00865.1-3"/>
    <property type="match status" value="1"/>
</dbReference>
<dbReference type="PANTHER" id="PTHR21198">
    <property type="entry name" value="GLUTAMATE RACEMASE"/>
    <property type="match status" value="1"/>
</dbReference>
<dbReference type="PANTHER" id="PTHR21198:SF2">
    <property type="entry name" value="GLUTAMATE RACEMASE"/>
    <property type="match status" value="1"/>
</dbReference>
<dbReference type="Pfam" id="PF01177">
    <property type="entry name" value="Asp_Glu_race"/>
    <property type="match status" value="1"/>
</dbReference>
<dbReference type="SUPFAM" id="SSF53681">
    <property type="entry name" value="Aspartate/glutamate racemase"/>
    <property type="match status" value="2"/>
</dbReference>
<dbReference type="PROSITE" id="PS00923">
    <property type="entry name" value="ASP_GLU_RACEMASE_1"/>
    <property type="match status" value="1"/>
</dbReference>
<dbReference type="PROSITE" id="PS00924">
    <property type="entry name" value="ASP_GLU_RACEMASE_2"/>
    <property type="match status" value="1"/>
</dbReference>
<sequence length="276" mass="29714">MSRPIGIIDSGIGGLTVASEIMRQLPKEPIVYIGDSARCPYGPRPVEEVRAFTWQMIGRLLHEDVKMIVIACNTATAVVLEEARAQLDIPVVGVIRPGAISAIQVSENRHVAVIGTIGTIASNAYTMALHSIDENVTVESLACPLFVPLVEQGTIKGPEAEAVVRESLAPLQGAGFDTLILGCTHYPLLKPVIEACLPSVTVISSGEETAREVSSLLFYHSMNEQHQAKATHRFYTTGEANQFKQLAASWLNIHTDSVASIHLDGPLPVQATMKSK</sequence>
<reference key="1">
    <citation type="submission" date="2003-10" db="EMBL/GenBank/DDBJ databases">
        <title>The complete genome sequence of the alkaliphilic Bacillus clausii KSM-K16.</title>
        <authorList>
            <person name="Takaki Y."/>
            <person name="Kageyama Y."/>
            <person name="Shimamura S."/>
            <person name="Suzuki H."/>
            <person name="Nishi S."/>
            <person name="Hatada Y."/>
            <person name="Kawai S."/>
            <person name="Ito S."/>
            <person name="Horikoshi K."/>
        </authorList>
    </citation>
    <scope>NUCLEOTIDE SEQUENCE [LARGE SCALE GENOMIC DNA]</scope>
    <source>
        <strain>KSM-K16</strain>
    </source>
</reference>
<name>MURI_SHOC1</name>
<gene>
    <name evidence="1" type="primary">murI</name>
    <name type="ordered locus">ABC2656</name>
</gene>
<organism>
    <name type="scientific">Shouchella clausii (strain KSM-K16)</name>
    <name type="common">Alkalihalobacillus clausii</name>
    <dbReference type="NCBI Taxonomy" id="66692"/>
    <lineage>
        <taxon>Bacteria</taxon>
        <taxon>Bacillati</taxon>
        <taxon>Bacillota</taxon>
        <taxon>Bacilli</taxon>
        <taxon>Bacillales</taxon>
        <taxon>Bacillaceae</taxon>
        <taxon>Shouchella</taxon>
    </lineage>
</organism>
<keyword id="KW-0133">Cell shape</keyword>
<keyword id="KW-0961">Cell wall biogenesis/degradation</keyword>
<keyword id="KW-0413">Isomerase</keyword>
<keyword id="KW-0573">Peptidoglycan synthesis</keyword>
<keyword id="KW-1185">Reference proteome</keyword>
<evidence type="ECO:0000255" key="1">
    <source>
        <dbReference type="HAMAP-Rule" id="MF_00258"/>
    </source>
</evidence>
<comment type="function">
    <text evidence="1">Provides the (R)-glutamate required for cell wall biosynthesis.</text>
</comment>
<comment type="catalytic activity">
    <reaction evidence="1">
        <text>L-glutamate = D-glutamate</text>
        <dbReference type="Rhea" id="RHEA:12813"/>
        <dbReference type="ChEBI" id="CHEBI:29985"/>
        <dbReference type="ChEBI" id="CHEBI:29986"/>
        <dbReference type="EC" id="5.1.1.3"/>
    </reaction>
</comment>
<comment type="pathway">
    <text evidence="1">Cell wall biogenesis; peptidoglycan biosynthesis.</text>
</comment>
<comment type="similarity">
    <text evidence="1">Belongs to the aspartate/glutamate racemases family.</text>
</comment>
<feature type="chain" id="PRO_1000047544" description="Glutamate racemase">
    <location>
        <begin position="1"/>
        <end position="276"/>
    </location>
</feature>
<feature type="active site" description="Proton donor/acceptor" evidence="1">
    <location>
        <position position="72"/>
    </location>
</feature>
<feature type="active site" description="Proton donor/acceptor" evidence="1">
    <location>
        <position position="183"/>
    </location>
</feature>
<feature type="binding site" evidence="1">
    <location>
        <begin position="9"/>
        <end position="10"/>
    </location>
    <ligand>
        <name>substrate</name>
    </ligand>
</feature>
<feature type="binding site" evidence="1">
    <location>
        <begin position="41"/>
        <end position="42"/>
    </location>
    <ligand>
        <name>substrate</name>
    </ligand>
</feature>
<feature type="binding site" evidence="1">
    <location>
        <begin position="73"/>
        <end position="74"/>
    </location>
    <ligand>
        <name>substrate</name>
    </ligand>
</feature>
<feature type="binding site" evidence="1">
    <location>
        <begin position="184"/>
        <end position="185"/>
    </location>
    <ligand>
        <name>substrate</name>
    </ligand>
</feature>
<accession>Q5WEL9</accession>
<protein>
    <recommendedName>
        <fullName evidence="1">Glutamate racemase</fullName>
        <ecNumber evidence="1">5.1.1.3</ecNumber>
    </recommendedName>
</protein>